<keyword id="KW-0997">Cell inner membrane</keyword>
<keyword id="KW-1003">Cell membrane</keyword>
<keyword id="KW-0472">Membrane</keyword>
<keyword id="KW-0812">Transmembrane</keyword>
<keyword id="KW-1133">Transmembrane helix</keyword>
<reference key="1">
    <citation type="journal article" date="2008" name="Genome Res.">
        <title>Comparative genome analysis of Salmonella enteritidis PT4 and Salmonella gallinarum 287/91 provides insights into evolutionary and host adaptation pathways.</title>
        <authorList>
            <person name="Thomson N.R."/>
            <person name="Clayton D.J."/>
            <person name="Windhorst D."/>
            <person name="Vernikos G."/>
            <person name="Davidson S."/>
            <person name="Churcher C."/>
            <person name="Quail M.A."/>
            <person name="Stevens M."/>
            <person name="Jones M.A."/>
            <person name="Watson M."/>
            <person name="Barron A."/>
            <person name="Layton A."/>
            <person name="Pickard D."/>
            <person name="Kingsley R.A."/>
            <person name="Bignell A."/>
            <person name="Clark L."/>
            <person name="Harris B."/>
            <person name="Ormond D."/>
            <person name="Abdellah Z."/>
            <person name="Brooks K."/>
            <person name="Cherevach I."/>
            <person name="Chillingworth T."/>
            <person name="Woodward J."/>
            <person name="Norberczak H."/>
            <person name="Lord A."/>
            <person name="Arrowsmith C."/>
            <person name="Jagels K."/>
            <person name="Moule S."/>
            <person name="Mungall K."/>
            <person name="Saunders M."/>
            <person name="Whitehead S."/>
            <person name="Chabalgoity J.A."/>
            <person name="Maskell D."/>
            <person name="Humphreys T."/>
            <person name="Roberts M."/>
            <person name="Barrow P.A."/>
            <person name="Dougan G."/>
            <person name="Parkhill J."/>
        </authorList>
    </citation>
    <scope>NUCLEOTIDE SEQUENCE [LARGE SCALE GENOMIC DNA]</scope>
    <source>
        <strain>287/91 / NCTC 13346</strain>
    </source>
</reference>
<organism>
    <name type="scientific">Salmonella gallinarum (strain 287/91 / NCTC 13346)</name>
    <dbReference type="NCBI Taxonomy" id="550538"/>
    <lineage>
        <taxon>Bacteria</taxon>
        <taxon>Pseudomonadati</taxon>
        <taxon>Pseudomonadota</taxon>
        <taxon>Gammaproteobacteria</taxon>
        <taxon>Enterobacterales</taxon>
        <taxon>Enterobacteriaceae</taxon>
        <taxon>Salmonella</taxon>
    </lineage>
</organism>
<protein>
    <recommendedName>
        <fullName evidence="1">PhoP/PhoQ regulator MgrB</fullName>
    </recommendedName>
</protein>
<name>MGRB_SALG2</name>
<feature type="chain" id="PRO_5000398152" description="PhoP/PhoQ regulator MgrB">
    <location>
        <begin position="1"/>
        <end position="47"/>
    </location>
</feature>
<feature type="transmembrane region" description="Helical" evidence="1">
    <location>
        <begin position="6"/>
        <end position="26"/>
    </location>
</feature>
<sequence length="47" mass="5519">MKKFRWVVLGIVVVVCLLLWAQVFNIMCNQDVQFFSGICAINKFIPW</sequence>
<comment type="function">
    <text evidence="1">PhoP-regulated transcription is redox-sensitive, being activated when the periplasm becomes more reducing. MgrB acts between DsbA/DsbB and PhoP/PhoQ in this pathway. Represses PhoP/PhoQ signaling, possibly by binding to the periplasmic domain of PhoQ, altering its activity and that of downstream effector PhoP.</text>
</comment>
<comment type="subunit">
    <text evidence="1">May form homooligomers. Probably interacts with the periplasmic domain of PhoQ.</text>
</comment>
<comment type="subcellular location">
    <subcellularLocation>
        <location evidence="1">Cell inner membrane</location>
        <topology evidence="1">Single-pass membrane protein</topology>
    </subcellularLocation>
</comment>
<comment type="similarity">
    <text evidence="1">Belongs to the MgrB family.</text>
</comment>
<proteinExistence type="inferred from homology"/>
<dbReference type="EMBL" id="AM933173">
    <property type="protein sequence ID" value="CAR37155.1"/>
    <property type="molecule type" value="Genomic_DNA"/>
</dbReference>
<dbReference type="RefSeq" id="WP_000714548.1">
    <property type="nucleotide sequence ID" value="NC_011274.1"/>
</dbReference>
<dbReference type="KEGG" id="seg:SG1277"/>
<dbReference type="HOGENOM" id="CLU_208030_1_0_6"/>
<dbReference type="Proteomes" id="UP000008321">
    <property type="component" value="Chromosome"/>
</dbReference>
<dbReference type="GO" id="GO:0005886">
    <property type="term" value="C:plasma membrane"/>
    <property type="evidence" value="ECO:0007669"/>
    <property type="project" value="UniProtKB-SubCell"/>
</dbReference>
<dbReference type="GO" id="GO:0070298">
    <property type="term" value="P:negative regulation of phosphorelay signal transduction system"/>
    <property type="evidence" value="ECO:0007669"/>
    <property type="project" value="UniProtKB-UniRule"/>
</dbReference>
<dbReference type="HAMAP" id="MF_01596">
    <property type="entry name" value="MgrB"/>
    <property type="match status" value="1"/>
</dbReference>
<dbReference type="InterPro" id="IPR020907">
    <property type="entry name" value="MgrB"/>
</dbReference>
<dbReference type="NCBIfam" id="NF007635">
    <property type="entry name" value="PRK10299.1"/>
    <property type="match status" value="1"/>
</dbReference>
<dbReference type="Pfam" id="PF13998">
    <property type="entry name" value="MgrB"/>
    <property type="match status" value="1"/>
</dbReference>
<evidence type="ECO:0000255" key="1">
    <source>
        <dbReference type="HAMAP-Rule" id="MF_01596"/>
    </source>
</evidence>
<accession>B5R8W2</accession>
<gene>
    <name evidence="1" type="primary">mgrB</name>
    <name type="ordered locus">SG1277</name>
</gene>